<gene>
    <name type="primary">WNT2</name>
</gene>
<sequence length="360" mass="40444">MNAPLGGIWLWLPLLLTWLTPEVNSSWWYMRATGGSSRVMCDNVPGLVSSQRQLCHRHPDVMRAISQGVAEWTAECQHQFRQHRWNCNTLDRDHSLFGRVLLRSSRESAFVYAISSAGVVFAITRACSQGEVKSCSCDPKKMGSAKDSKGIFDWGGCSDNIDYGIKFARAFVDAKERKGKDARALMNLHNNRAGRKAVKRFLKQECKCHGVSGSCTLRTCWLAMADFRKTGDYLWRKYNGAIQVVMNQDGTGFTVANERFKKPTKNDLVYFENSPDYCIRDREAGSLGTAGRVCNLTSRGMDSCEVMCCGRGYDTSHVTRMTKCGCKFHWCCAVRCQDCLEALDVHTCKAPKNADWTTPT</sequence>
<accession>Q07DY7</accession>
<dbReference type="EMBL" id="DP000193">
    <property type="protein sequence ID" value="ABJ08855.1"/>
    <property type="molecule type" value="Genomic_DNA"/>
</dbReference>
<dbReference type="SMR" id="Q07DY7"/>
<dbReference type="GlyCosmos" id="Q07DY7">
    <property type="glycosylation" value="1 site, No reported glycans"/>
</dbReference>
<dbReference type="GO" id="GO:0005615">
    <property type="term" value="C:extracellular space"/>
    <property type="evidence" value="ECO:0007669"/>
    <property type="project" value="TreeGrafter"/>
</dbReference>
<dbReference type="GO" id="GO:0005125">
    <property type="term" value="F:cytokine activity"/>
    <property type="evidence" value="ECO:0007669"/>
    <property type="project" value="TreeGrafter"/>
</dbReference>
<dbReference type="GO" id="GO:0005109">
    <property type="term" value="F:frizzled binding"/>
    <property type="evidence" value="ECO:0007669"/>
    <property type="project" value="TreeGrafter"/>
</dbReference>
<dbReference type="GO" id="GO:0048513">
    <property type="term" value="P:animal organ development"/>
    <property type="evidence" value="ECO:0007669"/>
    <property type="project" value="UniProtKB-ARBA"/>
</dbReference>
<dbReference type="GO" id="GO:0060070">
    <property type="term" value="P:canonical Wnt signaling pathway"/>
    <property type="evidence" value="ECO:0007669"/>
    <property type="project" value="TreeGrafter"/>
</dbReference>
<dbReference type="GO" id="GO:0045165">
    <property type="term" value="P:cell fate commitment"/>
    <property type="evidence" value="ECO:0007669"/>
    <property type="project" value="TreeGrafter"/>
</dbReference>
<dbReference type="GO" id="GO:0030182">
    <property type="term" value="P:neuron differentiation"/>
    <property type="evidence" value="ECO:0007669"/>
    <property type="project" value="TreeGrafter"/>
</dbReference>
<dbReference type="CDD" id="cd19345">
    <property type="entry name" value="Wnt_Wnt2"/>
    <property type="match status" value="1"/>
</dbReference>
<dbReference type="FunFam" id="3.30.2460.20:FF:000001">
    <property type="entry name" value="Wnt homolog"/>
    <property type="match status" value="1"/>
</dbReference>
<dbReference type="Gene3D" id="3.30.2460.20">
    <property type="match status" value="1"/>
</dbReference>
<dbReference type="InterPro" id="IPR005817">
    <property type="entry name" value="Wnt"/>
</dbReference>
<dbReference type="InterPro" id="IPR009140">
    <property type="entry name" value="Wnt2"/>
</dbReference>
<dbReference type="InterPro" id="IPR043158">
    <property type="entry name" value="Wnt_C"/>
</dbReference>
<dbReference type="InterPro" id="IPR018161">
    <property type="entry name" value="Wnt_CS"/>
</dbReference>
<dbReference type="PANTHER" id="PTHR12027:SF86">
    <property type="entry name" value="PROTEIN WNT-2"/>
    <property type="match status" value="1"/>
</dbReference>
<dbReference type="PANTHER" id="PTHR12027">
    <property type="entry name" value="WNT RELATED"/>
    <property type="match status" value="1"/>
</dbReference>
<dbReference type="Pfam" id="PF00110">
    <property type="entry name" value="wnt"/>
    <property type="match status" value="1"/>
</dbReference>
<dbReference type="PRINTS" id="PR01842">
    <property type="entry name" value="WNT2PROTEIN"/>
</dbReference>
<dbReference type="PRINTS" id="PR01349">
    <property type="entry name" value="WNTPROTEIN"/>
</dbReference>
<dbReference type="SMART" id="SM00097">
    <property type="entry name" value="WNT1"/>
    <property type="match status" value="1"/>
</dbReference>
<dbReference type="PROSITE" id="PS00246">
    <property type="entry name" value="WNT1"/>
    <property type="match status" value="1"/>
</dbReference>
<keyword id="KW-0217">Developmental protein</keyword>
<keyword id="KW-1015">Disulfide bond</keyword>
<keyword id="KW-0272">Extracellular matrix</keyword>
<keyword id="KW-0325">Glycoprotein</keyword>
<keyword id="KW-0449">Lipoprotein</keyword>
<keyword id="KW-0964">Secreted</keyword>
<keyword id="KW-0732">Signal</keyword>
<keyword id="KW-0879">Wnt signaling pathway</keyword>
<organism>
    <name type="scientific">Colobus guereza</name>
    <name type="common">Mantled guereza</name>
    <name type="synonym">Eastern black-and-white colobus monkey</name>
    <dbReference type="NCBI Taxonomy" id="33548"/>
    <lineage>
        <taxon>Eukaryota</taxon>
        <taxon>Metazoa</taxon>
        <taxon>Chordata</taxon>
        <taxon>Craniata</taxon>
        <taxon>Vertebrata</taxon>
        <taxon>Euteleostomi</taxon>
        <taxon>Mammalia</taxon>
        <taxon>Eutheria</taxon>
        <taxon>Euarchontoglires</taxon>
        <taxon>Primates</taxon>
        <taxon>Haplorrhini</taxon>
        <taxon>Catarrhini</taxon>
        <taxon>Cercopithecidae</taxon>
        <taxon>Colobinae</taxon>
        <taxon>Colobus</taxon>
    </lineage>
</organism>
<protein>
    <recommendedName>
        <fullName>Protein Wnt-2</fullName>
    </recommendedName>
</protein>
<comment type="function">
    <text evidence="1">Ligand for members of the frizzled family of seven transmembrane receptors. Probable developmental protein. May be a signaling molecule which affects the development of discrete regions of tissues. Is likely to signal over only few cell diameters (By similarity).</text>
</comment>
<comment type="subcellular location">
    <subcellularLocation>
        <location evidence="1">Secreted</location>
        <location evidence="1">Extracellular space</location>
        <location evidence="1">Extracellular matrix</location>
    </subcellularLocation>
</comment>
<comment type="PTM">
    <text evidence="2 4">Palmitoleoylation is required for efficient binding to frizzled receptors. Depalmitoleoylation leads to Wnt signaling pathway inhibition.</text>
</comment>
<comment type="similarity">
    <text evidence="6">Belongs to the Wnt family.</text>
</comment>
<reference key="1">
    <citation type="submission" date="2006-09" db="EMBL/GenBank/DDBJ databases">
        <title>NISC comparative sequencing initiative.</title>
        <authorList>
            <person name="Antonellis A."/>
            <person name="Ayele K."/>
            <person name="Benjamin B."/>
            <person name="Blakesley R.W."/>
            <person name="Boakye A."/>
            <person name="Bouffard G.G."/>
            <person name="Brinkley C."/>
            <person name="Brooks S."/>
            <person name="Chu G."/>
            <person name="Coleman H."/>
            <person name="Engle J."/>
            <person name="Gestole M."/>
            <person name="Greene A."/>
            <person name="Guan X."/>
            <person name="Gupta J."/>
            <person name="Haghighi P."/>
            <person name="Han J."/>
            <person name="Hansen N."/>
            <person name="Ho S.-L."/>
            <person name="Hu P."/>
            <person name="Hunter G."/>
            <person name="Hurle B."/>
            <person name="Idol J.R."/>
            <person name="Kwong P."/>
            <person name="Laric P."/>
            <person name="Larson S."/>
            <person name="Lee-Lin S.-Q."/>
            <person name="Legaspi R."/>
            <person name="Madden M."/>
            <person name="Maduro Q.L."/>
            <person name="Maduro V.B."/>
            <person name="Margulies E.H."/>
            <person name="Masiello C."/>
            <person name="Maskeri B."/>
            <person name="McDowell J."/>
            <person name="Mojidi H.A."/>
            <person name="Mullikin J.C."/>
            <person name="Oestreicher J.S."/>
            <person name="Park M."/>
            <person name="Portnoy M.E."/>
            <person name="Prasad A."/>
            <person name="Puri O."/>
            <person name="Reddix-Dugue N."/>
            <person name="Schandler K."/>
            <person name="Schueler M.G."/>
            <person name="Sison C."/>
            <person name="Stantripop S."/>
            <person name="Stephen E."/>
            <person name="Taye A."/>
            <person name="Thomas J.W."/>
            <person name="Thomas P.J."/>
            <person name="Tsipouri V."/>
            <person name="Ung L."/>
            <person name="Vogt J.L."/>
            <person name="Wetherby K.D."/>
            <person name="Young A."/>
            <person name="Green E.D."/>
        </authorList>
    </citation>
    <scope>NUCLEOTIDE SEQUENCE [LARGE SCALE GENOMIC DNA]</scope>
</reference>
<name>WNT2_COLGU</name>
<feature type="signal peptide" evidence="5">
    <location>
        <begin position="1"/>
        <end position="25"/>
    </location>
</feature>
<feature type="chain" id="PRO_0000260340" description="Protein Wnt-2">
    <location>
        <begin position="26"/>
        <end position="360"/>
    </location>
</feature>
<feature type="lipid moiety-binding region" description="O-palmitoleoyl serine; by PORCN" evidence="4">
    <location>
        <position position="212"/>
    </location>
</feature>
<feature type="glycosylation site" description="N-linked (GlcNAc...) asparagine" evidence="5">
    <location>
        <position position="295"/>
    </location>
</feature>
<feature type="disulfide bond" evidence="3">
    <location>
        <begin position="76"/>
        <end position="87"/>
    </location>
</feature>
<feature type="disulfide bond" evidence="3">
    <location>
        <begin position="127"/>
        <end position="135"/>
    </location>
</feature>
<feature type="disulfide bond" evidence="3">
    <location>
        <begin position="137"/>
        <end position="157"/>
    </location>
</feature>
<feature type="disulfide bond" evidence="3">
    <location>
        <begin position="206"/>
        <end position="220"/>
    </location>
</feature>
<feature type="disulfide bond" evidence="3">
    <location>
        <begin position="208"/>
        <end position="215"/>
    </location>
</feature>
<feature type="disulfide bond" evidence="3">
    <location>
        <begin position="278"/>
        <end position="309"/>
    </location>
</feature>
<feature type="disulfide bond" evidence="3">
    <location>
        <begin position="294"/>
        <end position="304"/>
    </location>
</feature>
<feature type="disulfide bond" evidence="3">
    <location>
        <begin position="308"/>
        <end position="348"/>
    </location>
</feature>
<feature type="disulfide bond" evidence="3">
    <location>
        <begin position="324"/>
        <end position="339"/>
    </location>
</feature>
<feature type="disulfide bond" evidence="3">
    <location>
        <begin position="326"/>
        <end position="336"/>
    </location>
</feature>
<feature type="disulfide bond" evidence="3">
    <location>
        <begin position="331"/>
        <end position="332"/>
    </location>
</feature>
<proteinExistence type="inferred from homology"/>
<evidence type="ECO:0000250" key="1"/>
<evidence type="ECO:0000250" key="2">
    <source>
        <dbReference type="UniProtKB" id="P27467"/>
    </source>
</evidence>
<evidence type="ECO:0000250" key="3">
    <source>
        <dbReference type="UniProtKB" id="P28026"/>
    </source>
</evidence>
<evidence type="ECO:0000250" key="4">
    <source>
        <dbReference type="UniProtKB" id="P56704"/>
    </source>
</evidence>
<evidence type="ECO:0000255" key="5"/>
<evidence type="ECO:0000305" key="6"/>